<feature type="chain" id="PRO_0000285280" description="Protein PHLOEM PROTEIN 2-LIKE A5">
    <location>
        <begin position="1"/>
        <end position="411"/>
    </location>
</feature>
<feature type="domain" description="TIR" evidence="1">
    <location>
        <begin position="20"/>
        <end position="157"/>
    </location>
</feature>
<feature type="active site" evidence="1">
    <location>
        <position position="94"/>
    </location>
</feature>
<feature type="sequence variant" description="In strain: cv. An-2, cv. Bs-1, cv. Bu-0, cv. Chi-1, cv. Co-1, cv. Cvi-0, cv. El-0, cv. Gr-3, cv. Ita-0, cv. Jl-3, cv. Kas-1, cv. Landsberg erecta, cv. Lisse-2, cv. Lu-1, cv. Pi-0 and cv. Sf-1." evidence="2">
    <original>K</original>
    <variation>T</variation>
    <location>
        <position position="42"/>
    </location>
</feature>
<feature type="sequence variant" description="In strain: cv. An-2, cv. Bs-1, cv. Bu-0, cv. Chi-1, cv. Co-1, cv. Cvi-0, cv. El-0, cv. Gr-3, cv. Ita-0, cv. Jl-3, cv. Kas-1, cv. Landsberg erecta, cv. Lisse-2, cv. Lu-1, cv. Pi-0 and cv. Sf-1." evidence="2">
    <original>H</original>
    <variation>R</variation>
    <location>
        <position position="89"/>
    </location>
</feature>
<feature type="sequence variant" description="In strain: cv. An-2, cv. Bs-1, cv. Bu-0, cv. Chi-1, cv. Co-1, cv. Cvi-0, cv. El-0, cv. Gr-3, cv. Ita-0, cv. Jl-3, cv. Kas-1, cv. Landsberg erecta, cv. Lisse-2, cv. Lu-1, cv. Pi-0 and cv. Sf-1." evidence="2">
    <original>K</original>
    <variation>Q</variation>
    <location>
        <position position="97"/>
    </location>
</feature>
<feature type="sequence variant" description="In strain: cv. An-2, cv. Bs-1, cv. Bu-0, cv. Chi-1, cv. Co-1, cv. Cvi-0, cv. El-0, cv. Gr-3, cv. Ita-0, cv. Jl-3, cv. Kas-1, cv. Landsberg erecta, cv. Lisse-2, cv. Lu-1, cv. Pi-0 and cv. Sf-1." evidence="2">
    <original>I</original>
    <variation>V</variation>
    <location>
        <position position="108"/>
    </location>
</feature>
<feature type="sequence variant" description="In strain: cv. An-2, cv. Bs-1, cv. Bu-0, cv. Chi-1, cv. Co-1, cv. Cvi-0, cv. El-0, cv. Gr-3, cv. Ita-0, cv. Jl-3, cv. Kas-1, cv. Landsberg erecta, cv. Lisse-2, cv. Lu-1, cv. Pi-0 and cv. Sf-1." evidence="2">
    <original>L</original>
    <variation>I</variation>
    <location>
        <position position="116"/>
    </location>
</feature>
<feature type="sequence variant" description="In strain: cv. An-2, cv. Bs-1, cv. Bu-0, cv. Chi-1, cv. Co-1, cv. Cvi-0, cv. El-0, cv. Gr-3, cv. Ita-0, cv. Jl-3, cv. Kas-1, cv. Landsberg erecta, cv. Lisse-2, cv. Lu-1, cv. Pi-0 and cv. Sf-1." evidence="2">
    <original>DLT</original>
    <variation>HLK</variation>
    <location>
        <begin position="123"/>
        <end position="125"/>
    </location>
</feature>
<feature type="sequence variant" description="In strain: cv. An-2, cv. Bs-1, cv. Bu-0, cv. Chi-1, cv. Co-1, cv. Cvi-0, cv. El-0, cv. Gr-3, cv. Ita-0, cv. Jl-3, cv. Kas-1, cv. Landsberg erecta, cv. Lisse-2, cv. Lu-1, cv. Pi-0 and cv. Sf-1." evidence="2">
    <original>D</original>
    <variation>N</variation>
    <location>
        <position position="130"/>
    </location>
</feature>
<feature type="sequence variant" description="In strain: cv. An-2, cv. Bs-1, cv. Bu-0, cv. Chi-1, cv. Co-1, cv. Cvi-0, cv. El-0, cv. Gr-3, cv. Ita-0, cv. Jl-3, cv. Kas-1, cv. Landsberg erecta, cv. Lisse-2, cv. Lu-1, cv. Pi-0 and cv. Sf-1." evidence="2">
    <original>W</original>
    <variation>L</variation>
    <location>
        <position position="133"/>
    </location>
</feature>
<feature type="sequence variant" description="In strain: cv. An-2, cv. Bs-1, cv. Bu-0, cv. Chi-1, cv. Co-1, cv. Cvi-0, cv. El-0, cv. Gr-3, cv. Ita-0, cv. Jl-3, cv. Kas-1, cv. Landsberg erecta, cv. Lisse-2, cv. Lu-1, cv. Pi-0 and cv. Sf-1." evidence="2">
    <original>Q</original>
    <variation>H</variation>
    <location>
        <position position="140"/>
    </location>
</feature>
<feature type="sequence variant" description="In strain: cv. An-2, cv. Bs-1, cv. Bu-0, cv. Chi-1, cv. Co-1, cv. Cvi-0, cv. El-0, cv. Gr-3, cv. Ita-0, cv. Jl-3, cv. Kas-1, cv. Landsberg erecta, cv. Lisse-2, cv. Lu-1, cv. Pi-0 and cv. Sf-1." evidence="2">
    <original>H</original>
    <variation>Q</variation>
    <location>
        <position position="147"/>
    </location>
</feature>
<feature type="sequence variant" description="In strain: cv. An-2, cv. Bs-1, cv. Bu-0, cv. Chi-1, cv. Co-1, cv. Cvi-0, cv. El-0, cv. Gr-3, cv. Ita-0, cv. Jl-3, cv. Kas-1, cv. Landsberg erecta, cv. Lisse-2, cv. Lu-1, cv. Pi-0 and cv. Sf-1." evidence="2">
    <original>T</original>
    <variation>M</variation>
    <location>
        <position position="150"/>
    </location>
</feature>
<feature type="sequence variant" description="In strain: cv. An-2, cv. Bs-1, cv. Bu-0, cv. Chi-1, cv. Co-1, cv. Cvi-0, cv. El-0, cv. Gr-3, cv. Ita-0, cv. Jl-3, cv. Kas-1, cv. Landsberg erecta, cv. Lisse-2, cv. Lu-1, cv. Pi-0 and cv. Sf-1." evidence="2">
    <original>H</original>
    <variation>N</variation>
    <location>
        <position position="167"/>
    </location>
</feature>
<feature type="sequence variant" description="In strain: cv. An-2, cv. Bs-1, cv. Bu-0, cv. Chi-1, cv. Co-1, cv. Cvi-0, cv. El-0, cv. Gr-3, cv. Ita-0, cv. Jl-3, cv. Landsberg erecta, cv. Lisse-2, cv. Lu-1, cv. Pi-0 and cv. Sf-1." evidence="2">
    <original>K</original>
    <variation>R</variation>
    <location>
        <position position="188"/>
    </location>
</feature>
<feature type="sequence variant" description="In strain: cv. An-2, cv. Bs-1, cv. Bu-0, cv. Chi-1, cv. Co-1, cv. Cvi-0, cv. El-0, cv. Gr-3, cv. Ita-0, cv. Jl-3, cv. Landsberg erecta, cv. Lisse-2, cv. Lu-1, cv. Pi-0 and cv. Sf-1." evidence="2">
    <original>FQR</original>
    <variation>SQE</variation>
    <location>
        <begin position="191"/>
        <end position="193"/>
    </location>
</feature>
<feature type="sequence variant" description="In strain: cv. An-2, cv. Bs-1, cv. Bu-0, cv. Chi-1, cv. Co-1, cv. Cvi-0, cv. El-0, cv. Gr-3, cv. Ita-0, cv. Jl-3, cv. Landsberg erecta, cv. Lisse-2, cv. Lu-1, cv. Pi-0 and cv. Sf-1." evidence="2">
    <original>EI</original>
    <variation>VN</variation>
    <location>
        <begin position="197"/>
        <end position="198"/>
    </location>
</feature>
<reference key="1">
    <citation type="journal article" date="2000" name="Nature">
        <title>Sequence and analysis of chromosome 1 of the plant Arabidopsis thaliana.</title>
        <authorList>
            <person name="Theologis A."/>
            <person name="Ecker J.R."/>
            <person name="Palm C.J."/>
            <person name="Federspiel N.A."/>
            <person name="Kaul S."/>
            <person name="White O."/>
            <person name="Alonso J."/>
            <person name="Altafi H."/>
            <person name="Araujo R."/>
            <person name="Bowman C.L."/>
            <person name="Brooks S.Y."/>
            <person name="Buehler E."/>
            <person name="Chan A."/>
            <person name="Chao Q."/>
            <person name="Chen H."/>
            <person name="Cheuk R.F."/>
            <person name="Chin C.W."/>
            <person name="Chung M.K."/>
            <person name="Conn L."/>
            <person name="Conway A.B."/>
            <person name="Conway A.R."/>
            <person name="Creasy T.H."/>
            <person name="Dewar K."/>
            <person name="Dunn P."/>
            <person name="Etgu P."/>
            <person name="Feldblyum T.V."/>
            <person name="Feng J.-D."/>
            <person name="Fong B."/>
            <person name="Fujii C.Y."/>
            <person name="Gill J.E."/>
            <person name="Goldsmith A.D."/>
            <person name="Haas B."/>
            <person name="Hansen N.F."/>
            <person name="Hughes B."/>
            <person name="Huizar L."/>
            <person name="Hunter J.L."/>
            <person name="Jenkins J."/>
            <person name="Johnson-Hopson C."/>
            <person name="Khan S."/>
            <person name="Khaykin E."/>
            <person name="Kim C.J."/>
            <person name="Koo H.L."/>
            <person name="Kremenetskaia I."/>
            <person name="Kurtz D.B."/>
            <person name="Kwan A."/>
            <person name="Lam B."/>
            <person name="Langin-Hooper S."/>
            <person name="Lee A."/>
            <person name="Lee J.M."/>
            <person name="Lenz C.A."/>
            <person name="Li J.H."/>
            <person name="Li Y.-P."/>
            <person name="Lin X."/>
            <person name="Liu S.X."/>
            <person name="Liu Z.A."/>
            <person name="Luros J.S."/>
            <person name="Maiti R."/>
            <person name="Marziali A."/>
            <person name="Militscher J."/>
            <person name="Miranda M."/>
            <person name="Nguyen M."/>
            <person name="Nierman W.C."/>
            <person name="Osborne B.I."/>
            <person name="Pai G."/>
            <person name="Peterson J."/>
            <person name="Pham P.K."/>
            <person name="Rizzo M."/>
            <person name="Rooney T."/>
            <person name="Rowley D."/>
            <person name="Sakano H."/>
            <person name="Salzberg S.L."/>
            <person name="Schwartz J.R."/>
            <person name="Shinn P."/>
            <person name="Southwick A.M."/>
            <person name="Sun H."/>
            <person name="Tallon L.J."/>
            <person name="Tambunga G."/>
            <person name="Toriumi M.J."/>
            <person name="Town C.D."/>
            <person name="Utterback T."/>
            <person name="Van Aken S."/>
            <person name="Vaysberg M."/>
            <person name="Vysotskaia V.S."/>
            <person name="Walker M."/>
            <person name="Wu D."/>
            <person name="Yu G."/>
            <person name="Fraser C.M."/>
            <person name="Venter J.C."/>
            <person name="Davis R.W."/>
        </authorList>
    </citation>
    <scope>NUCLEOTIDE SEQUENCE [LARGE SCALE GENOMIC DNA]</scope>
    <source>
        <strain>cv. Columbia</strain>
    </source>
</reference>
<reference key="2">
    <citation type="journal article" date="2017" name="Plant J.">
        <title>Araport11: a complete reannotation of the Arabidopsis thaliana reference genome.</title>
        <authorList>
            <person name="Cheng C.Y."/>
            <person name="Krishnakumar V."/>
            <person name="Chan A.P."/>
            <person name="Thibaud-Nissen F."/>
            <person name="Schobel S."/>
            <person name="Town C.D."/>
        </authorList>
    </citation>
    <scope>GENOME REANNOTATION</scope>
    <source>
        <strain>cv. Columbia</strain>
    </source>
</reference>
<reference key="3">
    <citation type="journal article" date="2003" name="Science">
        <title>Empirical analysis of transcriptional activity in the Arabidopsis genome.</title>
        <authorList>
            <person name="Yamada K."/>
            <person name="Lim J."/>
            <person name="Dale J.M."/>
            <person name="Chen H."/>
            <person name="Shinn P."/>
            <person name="Palm C.J."/>
            <person name="Southwick A.M."/>
            <person name="Wu H.C."/>
            <person name="Kim C.J."/>
            <person name="Nguyen M."/>
            <person name="Pham P.K."/>
            <person name="Cheuk R.F."/>
            <person name="Karlin-Newmann G."/>
            <person name="Liu S.X."/>
            <person name="Lam B."/>
            <person name="Sakano H."/>
            <person name="Wu T."/>
            <person name="Yu G."/>
            <person name="Miranda M."/>
            <person name="Quach H.L."/>
            <person name="Tripp M."/>
            <person name="Chang C.H."/>
            <person name="Lee J.M."/>
            <person name="Toriumi M.J."/>
            <person name="Chan M.M."/>
            <person name="Tang C.C."/>
            <person name="Onodera C.S."/>
            <person name="Deng J.M."/>
            <person name="Akiyama K."/>
            <person name="Ansari Y."/>
            <person name="Arakawa T."/>
            <person name="Banh J."/>
            <person name="Banno F."/>
            <person name="Bowser L."/>
            <person name="Brooks S.Y."/>
            <person name="Carninci P."/>
            <person name="Chao Q."/>
            <person name="Choy N."/>
            <person name="Enju A."/>
            <person name="Goldsmith A.D."/>
            <person name="Gurjal M."/>
            <person name="Hansen N.F."/>
            <person name="Hayashizaki Y."/>
            <person name="Johnson-Hopson C."/>
            <person name="Hsuan V.W."/>
            <person name="Iida K."/>
            <person name="Karnes M."/>
            <person name="Khan S."/>
            <person name="Koesema E."/>
            <person name="Ishida J."/>
            <person name="Jiang P.X."/>
            <person name="Jones T."/>
            <person name="Kawai J."/>
            <person name="Kamiya A."/>
            <person name="Meyers C."/>
            <person name="Nakajima M."/>
            <person name="Narusaka M."/>
            <person name="Seki M."/>
            <person name="Sakurai T."/>
            <person name="Satou M."/>
            <person name="Tamse R."/>
            <person name="Vaysberg M."/>
            <person name="Wallender E.K."/>
            <person name="Wong C."/>
            <person name="Yamamura Y."/>
            <person name="Yuan S."/>
            <person name="Shinozaki K."/>
            <person name="Davis R.W."/>
            <person name="Theologis A."/>
            <person name="Ecker J.R."/>
        </authorList>
    </citation>
    <scope>NUCLEOTIDE SEQUENCE [LARGE SCALE MRNA]</scope>
    <source>
        <strain>cv. Columbia</strain>
    </source>
</reference>
<reference key="4">
    <citation type="submission" date="2004-09" db="EMBL/GenBank/DDBJ databases">
        <title>Large-scale analysis of RIKEN Arabidopsis full-length (RAFL) cDNAs.</title>
        <authorList>
            <person name="Totoki Y."/>
            <person name="Seki M."/>
            <person name="Ishida J."/>
            <person name="Nakajima M."/>
            <person name="Enju A."/>
            <person name="Kamiya A."/>
            <person name="Narusaka M."/>
            <person name="Shin-i T."/>
            <person name="Nakagawa M."/>
            <person name="Sakamoto N."/>
            <person name="Oishi K."/>
            <person name="Kohara Y."/>
            <person name="Kobayashi M."/>
            <person name="Toyoda A."/>
            <person name="Sakaki Y."/>
            <person name="Sakurai T."/>
            <person name="Iida K."/>
            <person name="Akiyama K."/>
            <person name="Satou M."/>
            <person name="Toyoda T."/>
            <person name="Konagaya A."/>
            <person name="Carninci P."/>
            <person name="Kawai J."/>
            <person name="Hayashizaki Y."/>
            <person name="Shinozaki K."/>
        </authorList>
    </citation>
    <scope>NUCLEOTIDE SEQUENCE [LARGE SCALE MRNA]</scope>
    <source>
        <strain>cv. Columbia</strain>
    </source>
</reference>
<reference key="5">
    <citation type="journal article" date="2003" name="Genetics">
        <title>Molecular population genetics of the Arabidopsis CLAVATA2 region: the genomic scale of variation and selection in a selfing species.</title>
        <authorList>
            <person name="Shepard K.A."/>
            <person name="Purugganan M.D."/>
        </authorList>
    </citation>
    <scope>NUCLEOTIDE SEQUENCE [GENOMIC DNA] OF 15-198</scope>
    <scope>VARIANTS THR-42; ARG-89; GLN-97; VAL-108; ILE-116; 123-ASP--THR-125 DELINS HIS-LEU-LYS; ASN-130; LEU-133; HIS-140; GLN-147; MET-150; ASN-167; ARG-188; 191-PHE--ARG-193 DELINS SER-GLN-GLU AND 197-GLU-ILE-198 DELINS VAL-ASN</scope>
    <source>
        <strain>cv. An-2</strain>
        <strain>cv. Bla-1</strain>
        <strain>cv. Bs-1</strain>
        <strain>cv. Bu-0</strain>
        <strain>cv. Chi-1</strain>
        <strain>cv. Co-1</strain>
        <strain>cv. Cvi-0</strain>
        <strain>cv. El-0</strain>
        <strain>cv. Fi-0</strain>
        <strain>cv. Gr-3</strain>
        <strain>cv. Ita-0</strain>
        <strain>cv. Jl-3</strain>
        <strain>cv. Kas-1</strain>
        <strain>cv. La-0</strain>
        <strain>cv. Landsberg erecta</strain>
        <strain>cv. Lisse-2</strain>
        <strain>cv. Lu-1</strain>
        <strain>cv. Pi-0</strain>
        <strain>cv. Sf-1</strain>
    </source>
</reference>
<reference key="6">
    <citation type="journal article" date="2003" name="Plant Physiol.">
        <title>Diversity of the superfamily of phloem lectins (phloem protein 2) in angiosperms.</title>
        <authorList>
            <person name="Dinant S."/>
            <person name="Clark A.M."/>
            <person name="Zhu Y."/>
            <person name="Vilaine F."/>
            <person name="Palauqui J.-C."/>
            <person name="Kusiak C."/>
            <person name="Thompson G.A."/>
        </authorList>
    </citation>
    <scope>GENE FAMILY</scope>
    <scope>NOMENCLATURE</scope>
</reference>
<keyword id="KW-0025">Alternative splicing</keyword>
<keyword id="KW-0378">Hydrolase</keyword>
<keyword id="KW-0520">NAD</keyword>
<keyword id="KW-1185">Reference proteome</keyword>
<evidence type="ECO:0000255" key="1">
    <source>
        <dbReference type="PROSITE-ProRule" id="PRU00204"/>
    </source>
</evidence>
<evidence type="ECO:0000269" key="2">
    <source>
    </source>
</evidence>
<evidence type="ECO:0000305" key="3"/>
<proteinExistence type="evidence at transcript level"/>
<gene>
    <name type="primary">PP2A5</name>
    <name type="ordered locus">At1g65390</name>
    <name type="ORF">T8F5.18</name>
</gene>
<name>P2A05_ARATH</name>
<accession>Q9C5Q9</accession>
<accession>O80811</accession>
<accession>Q84JG0</accession>
<accession>Q84K23</accession>
<accession>Q84VK8</accession>
<organism>
    <name type="scientific">Arabidopsis thaliana</name>
    <name type="common">Mouse-ear cress</name>
    <dbReference type="NCBI Taxonomy" id="3702"/>
    <lineage>
        <taxon>Eukaryota</taxon>
        <taxon>Viridiplantae</taxon>
        <taxon>Streptophyta</taxon>
        <taxon>Embryophyta</taxon>
        <taxon>Tracheophyta</taxon>
        <taxon>Spermatophyta</taxon>
        <taxon>Magnoliopsida</taxon>
        <taxon>eudicotyledons</taxon>
        <taxon>Gunneridae</taxon>
        <taxon>Pentapetalae</taxon>
        <taxon>rosids</taxon>
        <taxon>malvids</taxon>
        <taxon>Brassicales</taxon>
        <taxon>Brassicaceae</taxon>
        <taxon>Camelineae</taxon>
        <taxon>Arabidopsis</taxon>
    </lineage>
</organism>
<sequence length="411" mass="47963">MSGASSVSSICSSNVSLIPTGPQVFINFRGKDLRKGFMSFLKPALKKEKINVFIDEQEERGKYLISLFDTIGESKIALVIFSEGYCESHWCMDELVKIKEYMDQNRLIIIPIFYRLDLDVVKDLTGKFGDNFWDLVDKYQPEPKKLHKWTEALFSVCELFSLILPKHSDISDRDFVKSIVKAVKKVQKNFFQRRNGEIEYQDFSVPACKLTITMHESPNEEAVQVTVLNEFYQMKNQSPVPSYEFKFWVDLTRPKGNVFMIDARDLSIAWSEDSNHWTWLPLPNQNSNESVMEIAFLKSASWLDVAGKFDTRYLTPRTRYEVVFVVKLEYTFEWETLVKLKLDLPNTWEKPQEQSVDMFDYISDQWLDIPVGEFTTSKKNVGEISFAMYEHECQLWKSGLFVKGVTIRPKY</sequence>
<protein>
    <recommendedName>
        <fullName>Protein PHLOEM PROTEIN 2-LIKE A5</fullName>
        <shortName>AtPP2-A5</shortName>
        <ecNumber evidence="1">3.2.2.6</ecNumber>
    </recommendedName>
</protein>
<dbReference type="EC" id="3.2.2.6" evidence="1"/>
<dbReference type="EMBL" id="AC004512">
    <property type="protein sequence ID" value="AAC27148.1"/>
    <property type="status" value="ALT_SEQ"/>
    <property type="molecule type" value="Genomic_DNA"/>
</dbReference>
<dbReference type="EMBL" id="CP002684">
    <property type="protein sequence ID" value="AEE34368.1"/>
    <property type="molecule type" value="Genomic_DNA"/>
</dbReference>
<dbReference type="EMBL" id="AF325110">
    <property type="protein sequence ID" value="AAK17178.1"/>
    <property type="molecule type" value="mRNA"/>
</dbReference>
<dbReference type="EMBL" id="AK176581">
    <property type="protein sequence ID" value="BAD44344.1"/>
    <property type="molecule type" value="mRNA"/>
</dbReference>
<dbReference type="EMBL" id="AF528686">
    <property type="protein sequence ID" value="AAO43284.1"/>
    <property type="molecule type" value="Genomic_DNA"/>
</dbReference>
<dbReference type="EMBL" id="AF528687">
    <property type="protein sequence ID" value="AAO43285.1"/>
    <property type="molecule type" value="Genomic_DNA"/>
</dbReference>
<dbReference type="EMBL" id="AF528688">
    <property type="protein sequence ID" value="AAO43286.1"/>
    <property type="molecule type" value="Genomic_DNA"/>
</dbReference>
<dbReference type="EMBL" id="AF528689">
    <property type="protein sequence ID" value="AAO43287.1"/>
    <property type="molecule type" value="Genomic_DNA"/>
</dbReference>
<dbReference type="EMBL" id="AF528690">
    <property type="protein sequence ID" value="AAO43288.1"/>
    <property type="molecule type" value="Genomic_DNA"/>
</dbReference>
<dbReference type="EMBL" id="AF528691">
    <property type="protein sequence ID" value="AAO43289.1"/>
    <property type="molecule type" value="Genomic_DNA"/>
</dbReference>
<dbReference type="EMBL" id="AF528692">
    <property type="protein sequence ID" value="AAO43290.1"/>
    <property type="molecule type" value="Genomic_DNA"/>
</dbReference>
<dbReference type="EMBL" id="AF528693">
    <property type="protein sequence ID" value="AAO43291.1"/>
    <property type="molecule type" value="Genomic_DNA"/>
</dbReference>
<dbReference type="EMBL" id="AF528694">
    <property type="protein sequence ID" value="AAO43292.1"/>
    <property type="molecule type" value="Genomic_DNA"/>
</dbReference>
<dbReference type="EMBL" id="AF528695">
    <property type="protein sequence ID" value="AAO43293.1"/>
    <property type="molecule type" value="Genomic_DNA"/>
</dbReference>
<dbReference type="EMBL" id="AF528696">
    <property type="protein sequence ID" value="AAO43294.1"/>
    <property type="molecule type" value="Genomic_DNA"/>
</dbReference>
<dbReference type="EMBL" id="AF528697">
    <property type="protein sequence ID" value="AAO43295.1"/>
    <property type="molecule type" value="Genomic_DNA"/>
</dbReference>
<dbReference type="EMBL" id="AF528698">
    <property type="protein sequence ID" value="AAO43296.1"/>
    <property type="molecule type" value="Genomic_DNA"/>
</dbReference>
<dbReference type="EMBL" id="AF528699">
    <property type="protein sequence ID" value="AAO43297.1"/>
    <property type="molecule type" value="Genomic_DNA"/>
</dbReference>
<dbReference type="EMBL" id="AF528700">
    <property type="protein sequence ID" value="AAO43298.1"/>
    <property type="molecule type" value="Genomic_DNA"/>
</dbReference>
<dbReference type="EMBL" id="AF528701">
    <property type="protein sequence ID" value="AAO43299.1"/>
    <property type="molecule type" value="Genomic_DNA"/>
</dbReference>
<dbReference type="EMBL" id="AF528702">
    <property type="protein sequence ID" value="AAO43300.1"/>
    <property type="molecule type" value="Genomic_DNA"/>
</dbReference>
<dbReference type="EMBL" id="AF528703">
    <property type="protein sequence ID" value="AAO43301.1"/>
    <property type="molecule type" value="Genomic_DNA"/>
</dbReference>
<dbReference type="EMBL" id="AF528704">
    <property type="protein sequence ID" value="AAO43302.1"/>
    <property type="molecule type" value="Genomic_DNA"/>
</dbReference>
<dbReference type="PIR" id="T02363">
    <property type="entry name" value="T02363"/>
</dbReference>
<dbReference type="RefSeq" id="NP_176718.2">
    <molecule id="Q9C5Q9-1"/>
    <property type="nucleotide sequence ID" value="NM_105213.4"/>
</dbReference>
<dbReference type="SMR" id="Q9C5Q9"/>
<dbReference type="BioGRID" id="28072">
    <property type="interactions" value="6"/>
</dbReference>
<dbReference type="FunCoup" id="Q9C5Q9">
    <property type="interactions" value="3"/>
</dbReference>
<dbReference type="STRING" id="3702.Q9C5Q9"/>
<dbReference type="PaxDb" id="3702-AT1G65390.1"/>
<dbReference type="DNASU" id="842851"/>
<dbReference type="EnsemblPlants" id="AT1G65390.1">
    <molecule id="Q9C5Q9-1"/>
    <property type="protein sequence ID" value="AT1G65390.1"/>
    <property type="gene ID" value="AT1G65390"/>
</dbReference>
<dbReference type="GeneID" id="842851"/>
<dbReference type="Gramene" id="AT1G65390.1">
    <molecule id="Q9C5Q9-1"/>
    <property type="protein sequence ID" value="AT1G65390.1"/>
    <property type="gene ID" value="AT1G65390"/>
</dbReference>
<dbReference type="KEGG" id="ath:AT1G65390"/>
<dbReference type="Araport" id="AT1G65390"/>
<dbReference type="TAIR" id="AT1G65390">
    <property type="gene designation" value="PP2-A5"/>
</dbReference>
<dbReference type="eggNOG" id="KOG0017">
    <property type="taxonomic scope" value="Eukaryota"/>
</dbReference>
<dbReference type="HOGENOM" id="CLU_786077_0_0_1"/>
<dbReference type="InParanoid" id="Q9C5Q9"/>
<dbReference type="PhylomeDB" id="Q9C5Q9"/>
<dbReference type="PRO" id="PR:Q9C5Q9"/>
<dbReference type="Proteomes" id="UP000006548">
    <property type="component" value="Chromosome 1"/>
</dbReference>
<dbReference type="ExpressionAtlas" id="Q9C5Q9">
    <property type="expression patterns" value="baseline and differential"/>
</dbReference>
<dbReference type="GO" id="GO:0005737">
    <property type="term" value="C:cytoplasm"/>
    <property type="evidence" value="ECO:0000314"/>
    <property type="project" value="TAIR"/>
</dbReference>
<dbReference type="GO" id="GO:0012505">
    <property type="term" value="C:endomembrane system"/>
    <property type="evidence" value="ECO:0000314"/>
    <property type="project" value="TAIR"/>
</dbReference>
<dbReference type="GO" id="GO:0005634">
    <property type="term" value="C:nucleus"/>
    <property type="evidence" value="ECO:0000314"/>
    <property type="project" value="TAIR"/>
</dbReference>
<dbReference type="GO" id="GO:0030246">
    <property type="term" value="F:carbohydrate binding"/>
    <property type="evidence" value="ECO:0000250"/>
    <property type="project" value="TAIR"/>
</dbReference>
<dbReference type="GO" id="GO:0061809">
    <property type="term" value="F:NAD+ nucleosidase activity, cyclic ADP-ribose generating"/>
    <property type="evidence" value="ECO:0007669"/>
    <property type="project" value="UniProtKB-EC"/>
</dbReference>
<dbReference type="GO" id="GO:0002213">
    <property type="term" value="P:defense response to insect"/>
    <property type="evidence" value="ECO:0000314"/>
    <property type="project" value="TAIR"/>
</dbReference>
<dbReference type="GO" id="GO:0009867">
    <property type="term" value="P:jasmonic acid mediated signaling pathway"/>
    <property type="evidence" value="ECO:0000270"/>
    <property type="project" value="TAIR"/>
</dbReference>
<dbReference type="GO" id="GO:0032260">
    <property type="term" value="P:response to jasmonic acid stimulus involved in jasmonic acid and ethylene-dependent systemic resistance"/>
    <property type="evidence" value="ECO:0000270"/>
    <property type="project" value="TAIR"/>
</dbReference>
<dbReference type="GO" id="GO:0009863">
    <property type="term" value="P:salicylic acid mediated signaling pathway"/>
    <property type="evidence" value="ECO:0000270"/>
    <property type="project" value="TAIR"/>
</dbReference>
<dbReference type="FunFam" id="3.40.50.10140:FF:000007">
    <property type="entry name" value="Disease resistance protein (TIR-NBS-LRR class)"/>
    <property type="match status" value="1"/>
</dbReference>
<dbReference type="Gene3D" id="3.40.50.10140">
    <property type="entry name" value="Toll/interleukin-1 receptor homology (TIR) domain"/>
    <property type="match status" value="1"/>
</dbReference>
<dbReference type="InterPro" id="IPR025886">
    <property type="entry name" value="PP2-like"/>
</dbReference>
<dbReference type="InterPro" id="IPR052147">
    <property type="entry name" value="PP2-like/Lectin"/>
</dbReference>
<dbReference type="InterPro" id="IPR000157">
    <property type="entry name" value="TIR_dom"/>
</dbReference>
<dbReference type="InterPro" id="IPR035897">
    <property type="entry name" value="Toll_tir_struct_dom_sf"/>
</dbReference>
<dbReference type="PANTHER" id="PTHR48478">
    <property type="entry name" value="LECTIN-LIKE"/>
    <property type="match status" value="1"/>
</dbReference>
<dbReference type="PANTHER" id="PTHR48478:SF1">
    <property type="entry name" value="LECTIN-LIKE"/>
    <property type="match status" value="1"/>
</dbReference>
<dbReference type="Pfam" id="PF14299">
    <property type="entry name" value="PP2"/>
    <property type="match status" value="1"/>
</dbReference>
<dbReference type="Pfam" id="PF01582">
    <property type="entry name" value="TIR"/>
    <property type="match status" value="1"/>
</dbReference>
<dbReference type="SMART" id="SM00255">
    <property type="entry name" value="TIR"/>
    <property type="match status" value="1"/>
</dbReference>
<dbReference type="SUPFAM" id="SSF52200">
    <property type="entry name" value="Toll/Interleukin receptor TIR domain"/>
    <property type="match status" value="1"/>
</dbReference>
<dbReference type="PROSITE" id="PS50104">
    <property type="entry name" value="TIR"/>
    <property type="match status" value="1"/>
</dbReference>
<comment type="catalytic activity">
    <reaction evidence="1">
        <text>NAD(+) + H2O = ADP-D-ribose + nicotinamide + H(+)</text>
        <dbReference type="Rhea" id="RHEA:16301"/>
        <dbReference type="ChEBI" id="CHEBI:15377"/>
        <dbReference type="ChEBI" id="CHEBI:15378"/>
        <dbReference type="ChEBI" id="CHEBI:17154"/>
        <dbReference type="ChEBI" id="CHEBI:57540"/>
        <dbReference type="ChEBI" id="CHEBI:57967"/>
        <dbReference type="EC" id="3.2.2.6"/>
    </reaction>
    <physiologicalReaction direction="left-to-right" evidence="1">
        <dbReference type="Rhea" id="RHEA:16302"/>
    </physiologicalReaction>
</comment>
<comment type="alternative products">
    <event type="alternative splicing"/>
    <isoform>
        <id>Q9C5Q9-1</id>
        <name>1</name>
        <sequence type="displayed"/>
    </isoform>
    <text>A number of isoforms are produced. According to EST sequences.</text>
</comment>
<comment type="domain">
    <text evidence="1">The TIR domain mediates NAD(+) hydrolase (NADase) activity. Self-association of TIR domains is required for NADase activity.</text>
</comment>
<comment type="sequence caution" evidence="3">
    <conflict type="erroneous gene model prediction">
        <sequence resource="EMBL-CDS" id="AAC27148"/>
    </conflict>
</comment>